<proteinExistence type="inferred from homology"/>
<gene>
    <name evidence="1" type="primary">rplR</name>
    <name type="ordered locus">Daci_1038</name>
</gene>
<evidence type="ECO:0000255" key="1">
    <source>
        <dbReference type="HAMAP-Rule" id="MF_01337"/>
    </source>
</evidence>
<evidence type="ECO:0000305" key="2"/>
<accession>A9BRW7</accession>
<organism>
    <name type="scientific">Delftia acidovorans (strain DSM 14801 / SPH-1)</name>
    <dbReference type="NCBI Taxonomy" id="398578"/>
    <lineage>
        <taxon>Bacteria</taxon>
        <taxon>Pseudomonadati</taxon>
        <taxon>Pseudomonadota</taxon>
        <taxon>Betaproteobacteria</taxon>
        <taxon>Burkholderiales</taxon>
        <taxon>Comamonadaceae</taxon>
        <taxon>Delftia</taxon>
    </lineage>
</organism>
<comment type="function">
    <text evidence="1">This is one of the proteins that bind and probably mediate the attachment of the 5S RNA into the large ribosomal subunit, where it forms part of the central protuberance.</text>
</comment>
<comment type="subunit">
    <text evidence="1">Part of the 50S ribosomal subunit; part of the 5S rRNA/L5/L18/L25 subcomplex. Contacts the 5S and 23S rRNAs.</text>
</comment>
<comment type="similarity">
    <text evidence="1">Belongs to the universal ribosomal protein uL18 family.</text>
</comment>
<dbReference type="EMBL" id="CP000884">
    <property type="protein sequence ID" value="ABX33684.1"/>
    <property type="molecule type" value="Genomic_DNA"/>
</dbReference>
<dbReference type="RefSeq" id="WP_012202970.1">
    <property type="nucleotide sequence ID" value="NC_010002.1"/>
</dbReference>
<dbReference type="SMR" id="A9BRW7"/>
<dbReference type="STRING" id="398578.Daci_1038"/>
<dbReference type="GeneID" id="94695189"/>
<dbReference type="KEGG" id="dac:Daci_1038"/>
<dbReference type="eggNOG" id="COG0256">
    <property type="taxonomic scope" value="Bacteria"/>
</dbReference>
<dbReference type="HOGENOM" id="CLU_098841_0_1_4"/>
<dbReference type="Proteomes" id="UP000000784">
    <property type="component" value="Chromosome"/>
</dbReference>
<dbReference type="GO" id="GO:0022625">
    <property type="term" value="C:cytosolic large ribosomal subunit"/>
    <property type="evidence" value="ECO:0007669"/>
    <property type="project" value="TreeGrafter"/>
</dbReference>
<dbReference type="GO" id="GO:0008097">
    <property type="term" value="F:5S rRNA binding"/>
    <property type="evidence" value="ECO:0007669"/>
    <property type="project" value="TreeGrafter"/>
</dbReference>
<dbReference type="GO" id="GO:0003735">
    <property type="term" value="F:structural constituent of ribosome"/>
    <property type="evidence" value="ECO:0007669"/>
    <property type="project" value="InterPro"/>
</dbReference>
<dbReference type="GO" id="GO:0006412">
    <property type="term" value="P:translation"/>
    <property type="evidence" value="ECO:0007669"/>
    <property type="project" value="UniProtKB-UniRule"/>
</dbReference>
<dbReference type="CDD" id="cd00432">
    <property type="entry name" value="Ribosomal_L18_L5e"/>
    <property type="match status" value="1"/>
</dbReference>
<dbReference type="FunFam" id="3.30.420.100:FF:000001">
    <property type="entry name" value="50S ribosomal protein L18"/>
    <property type="match status" value="1"/>
</dbReference>
<dbReference type="Gene3D" id="3.30.420.100">
    <property type="match status" value="1"/>
</dbReference>
<dbReference type="HAMAP" id="MF_01337_B">
    <property type="entry name" value="Ribosomal_uL18_B"/>
    <property type="match status" value="1"/>
</dbReference>
<dbReference type="InterPro" id="IPR004389">
    <property type="entry name" value="Ribosomal_uL18_bac-type"/>
</dbReference>
<dbReference type="InterPro" id="IPR005484">
    <property type="entry name" value="Ribosomal_uL18_bac/euk"/>
</dbReference>
<dbReference type="NCBIfam" id="TIGR00060">
    <property type="entry name" value="L18_bact"/>
    <property type="match status" value="1"/>
</dbReference>
<dbReference type="PANTHER" id="PTHR12899">
    <property type="entry name" value="39S RIBOSOMAL PROTEIN L18, MITOCHONDRIAL"/>
    <property type="match status" value="1"/>
</dbReference>
<dbReference type="PANTHER" id="PTHR12899:SF3">
    <property type="entry name" value="LARGE RIBOSOMAL SUBUNIT PROTEIN UL18M"/>
    <property type="match status" value="1"/>
</dbReference>
<dbReference type="Pfam" id="PF00861">
    <property type="entry name" value="Ribosomal_L18p"/>
    <property type="match status" value="1"/>
</dbReference>
<dbReference type="SUPFAM" id="SSF53137">
    <property type="entry name" value="Translational machinery components"/>
    <property type="match status" value="1"/>
</dbReference>
<keyword id="KW-1185">Reference proteome</keyword>
<keyword id="KW-0687">Ribonucleoprotein</keyword>
<keyword id="KW-0689">Ribosomal protein</keyword>
<keyword id="KW-0694">RNA-binding</keyword>
<keyword id="KW-0699">rRNA-binding</keyword>
<protein>
    <recommendedName>
        <fullName evidence="1">Large ribosomal subunit protein uL18</fullName>
    </recommendedName>
    <alternativeName>
        <fullName evidence="2">50S ribosomal protein L18</fullName>
    </alternativeName>
</protein>
<feature type="chain" id="PRO_1000142651" description="Large ribosomal subunit protein uL18">
    <location>
        <begin position="1"/>
        <end position="121"/>
    </location>
</feature>
<reference key="1">
    <citation type="submission" date="2007-11" db="EMBL/GenBank/DDBJ databases">
        <title>Complete sequence of Delftia acidovorans DSM 14801 / SPH-1.</title>
        <authorList>
            <person name="Copeland A."/>
            <person name="Lucas S."/>
            <person name="Lapidus A."/>
            <person name="Barry K."/>
            <person name="Glavina del Rio T."/>
            <person name="Dalin E."/>
            <person name="Tice H."/>
            <person name="Pitluck S."/>
            <person name="Lowry S."/>
            <person name="Clum A."/>
            <person name="Schmutz J."/>
            <person name="Larimer F."/>
            <person name="Land M."/>
            <person name="Hauser L."/>
            <person name="Kyrpides N."/>
            <person name="Kim E."/>
            <person name="Schleheck D."/>
            <person name="Richardson P."/>
        </authorList>
    </citation>
    <scope>NUCLEOTIDE SEQUENCE [LARGE SCALE GENOMIC DNA]</scope>
    <source>
        <strain>DSM 14801 / SPH-1</strain>
    </source>
</reference>
<name>RL18_DELAS</name>
<sequence length="121" mass="12915">MLTKKEQRLRRARQTRIRIAQQGVARLSVNRTNLHIYASVVSEDGTKVLASASTAEAEVRTQLGAIGKGGNVAAATLIGKRIAEKAKAAGVEKVAFDRAGFAYHGRVKALAEAAREAGLQF</sequence>